<reference key="1">
    <citation type="journal article" date="2003" name="Protein Sci.">
        <title>Isolation and biochemical characterization of LEAP-2, a novel blood peptide expressed in the liver.</title>
        <authorList>
            <person name="Krause A."/>
            <person name="Sillard R."/>
            <person name="Kleemeier B."/>
            <person name="Kluever E."/>
            <person name="Maronde E."/>
            <person name="Conejo-Garcia J.-R."/>
            <person name="Forssmann W.-G."/>
            <person name="Schulz-Knappe P."/>
            <person name="Nehls M.C."/>
            <person name="Wattler F."/>
            <person name="Wattler S."/>
            <person name="Adermann K."/>
        </authorList>
    </citation>
    <scope>NUCLEOTIDE SEQUENCE [GENOMIC DNA]</scope>
</reference>
<accession>Q95M25</accession>
<name>LEAP2_MACMU</name>
<comment type="function">
    <text>Has an antimicrobial activity.</text>
</comment>
<comment type="subcellular location">
    <subcellularLocation>
        <location>Secreted</location>
    </subcellularLocation>
</comment>
<comment type="similarity">
    <text evidence="3">Belongs to the LEAP2 family.</text>
</comment>
<gene>
    <name type="primary">LEAP2</name>
</gene>
<protein>
    <recommendedName>
        <fullName>Liver-expressed antimicrobial peptide 2</fullName>
        <shortName>LEAP-2</shortName>
    </recommendedName>
</protein>
<proteinExistence type="inferred from homology"/>
<feature type="signal peptide" evidence="2">
    <location>
        <begin position="1"/>
        <end position="22"/>
    </location>
</feature>
<feature type="propeptide" id="PRO_0000017357">
    <location>
        <begin position="23"/>
        <end position="37"/>
    </location>
</feature>
<feature type="chain" id="PRO_0000017358" description="Liver-expressed antimicrobial peptide 2">
    <location>
        <begin position="38"/>
        <end position="77"/>
    </location>
</feature>
<feature type="disulfide bond" evidence="1">
    <location>
        <begin position="54"/>
        <end position="65"/>
    </location>
</feature>
<feature type="disulfide bond" evidence="1">
    <location>
        <begin position="60"/>
        <end position="70"/>
    </location>
</feature>
<organism>
    <name type="scientific">Macaca mulatta</name>
    <name type="common">Rhesus macaque</name>
    <dbReference type="NCBI Taxonomy" id="9544"/>
    <lineage>
        <taxon>Eukaryota</taxon>
        <taxon>Metazoa</taxon>
        <taxon>Chordata</taxon>
        <taxon>Craniata</taxon>
        <taxon>Vertebrata</taxon>
        <taxon>Euteleostomi</taxon>
        <taxon>Mammalia</taxon>
        <taxon>Eutheria</taxon>
        <taxon>Euarchontoglires</taxon>
        <taxon>Primates</taxon>
        <taxon>Haplorrhini</taxon>
        <taxon>Catarrhini</taxon>
        <taxon>Cercopithecidae</taxon>
        <taxon>Cercopithecinae</taxon>
        <taxon>Macaca</taxon>
    </lineage>
</organism>
<sequence length="77" mass="8801">MWHLKLCAVLMIFLLLLGQTDGSPIPEVSSAKRRPRRMTPFWRGVSLRPIGASCRDDSECITRLCRKRRCSLSVAQE</sequence>
<dbReference type="EMBL" id="AJ409056">
    <property type="protein sequence ID" value="CAC51520.1"/>
    <property type="molecule type" value="Genomic_DNA"/>
</dbReference>
<dbReference type="RefSeq" id="NP_001107582.1">
    <property type="nucleotide sequence ID" value="NM_001114110.1"/>
</dbReference>
<dbReference type="SMR" id="Q95M25"/>
<dbReference type="FunCoup" id="Q95M25">
    <property type="interactions" value="144"/>
</dbReference>
<dbReference type="STRING" id="9544.ENSMMUP00000034142"/>
<dbReference type="PaxDb" id="9544-ENSMMUP00000020524"/>
<dbReference type="Ensembl" id="ENSMMUT00000041106.3">
    <property type="protein sequence ID" value="ENSMMUP00000034142.1"/>
    <property type="gene ID" value="ENSMMUG00000015638.4"/>
</dbReference>
<dbReference type="GeneID" id="709041"/>
<dbReference type="KEGG" id="mcc:709041"/>
<dbReference type="CTD" id="116842"/>
<dbReference type="VEuPathDB" id="HostDB:ENSMMUG00000015638"/>
<dbReference type="VGNC" id="VGNC:74161">
    <property type="gene designation" value="LEAP2"/>
</dbReference>
<dbReference type="eggNOG" id="ENOG502SD5B">
    <property type="taxonomic scope" value="Eukaryota"/>
</dbReference>
<dbReference type="GeneTree" id="ENSGT00390000013467"/>
<dbReference type="HOGENOM" id="CLU_178163_0_0_1"/>
<dbReference type="InParanoid" id="Q95M25"/>
<dbReference type="OMA" id="CITMLCR"/>
<dbReference type="OrthoDB" id="9450163at2759"/>
<dbReference type="Proteomes" id="UP000006718">
    <property type="component" value="Chromosome 6"/>
</dbReference>
<dbReference type="Bgee" id="ENSMMUG00000015638">
    <property type="expression patterns" value="Expressed in liver and 21 other cell types or tissues"/>
</dbReference>
<dbReference type="GO" id="GO:0005576">
    <property type="term" value="C:extracellular region"/>
    <property type="evidence" value="ECO:0007669"/>
    <property type="project" value="UniProtKB-SubCell"/>
</dbReference>
<dbReference type="GO" id="GO:0042742">
    <property type="term" value="P:defense response to bacterium"/>
    <property type="evidence" value="ECO:0007669"/>
    <property type="project" value="UniProtKB-KW"/>
</dbReference>
<dbReference type="FunFam" id="4.10.40.50:FF:000001">
    <property type="entry name" value="liver-expressed antimicrobial peptide 2"/>
    <property type="match status" value="1"/>
</dbReference>
<dbReference type="Gene3D" id="4.10.40.50">
    <property type="match status" value="1"/>
</dbReference>
<dbReference type="InterPro" id="IPR009955">
    <property type="entry name" value="LEAP-2"/>
</dbReference>
<dbReference type="PANTHER" id="PTHR21007">
    <property type="entry name" value="LIVER EXPRESSED ANTIMICROBIAL PEPTIDE 2"/>
    <property type="match status" value="1"/>
</dbReference>
<dbReference type="PANTHER" id="PTHR21007:SF1">
    <property type="entry name" value="LIVER-EXPRESSED ANTIMICROBIAL PEPTIDE 2"/>
    <property type="match status" value="1"/>
</dbReference>
<dbReference type="Pfam" id="PF07359">
    <property type="entry name" value="LEAP-2"/>
    <property type="match status" value="1"/>
</dbReference>
<keyword id="KW-0044">Antibiotic</keyword>
<keyword id="KW-0929">Antimicrobial</keyword>
<keyword id="KW-0165">Cleavage on pair of basic residues</keyword>
<keyword id="KW-1015">Disulfide bond</keyword>
<keyword id="KW-1185">Reference proteome</keyword>
<keyword id="KW-0964">Secreted</keyword>
<keyword id="KW-0732">Signal</keyword>
<evidence type="ECO:0000250" key="1"/>
<evidence type="ECO:0000255" key="2"/>
<evidence type="ECO:0000305" key="3"/>